<keyword id="KW-0002">3D-structure</keyword>
<keyword id="KW-0007">Acetylation</keyword>
<keyword id="KW-0025">Alternative splicing</keyword>
<keyword id="KW-0963">Cytoplasm</keyword>
<keyword id="KW-0217">Developmental protein</keyword>
<keyword id="KW-0221">Differentiation</keyword>
<keyword id="KW-1017">Isopeptide bond</keyword>
<keyword id="KW-0440">LIM domain</keyword>
<keyword id="KW-0479">Metal-binding</keyword>
<keyword id="KW-0539">Nucleus</keyword>
<keyword id="KW-1185">Reference proteome</keyword>
<keyword id="KW-0677">Repeat</keyword>
<keyword id="KW-0832">Ubl conjugation</keyword>
<keyword id="KW-0862">Zinc</keyword>
<keyword id="KW-0863">Zinc-finger</keyword>
<evidence type="ECO:0000250" key="1">
    <source>
        <dbReference type="UniProtKB" id="Q13642"/>
    </source>
</evidence>
<evidence type="ECO:0000255" key="2"/>
<evidence type="ECO:0000255" key="3">
    <source>
        <dbReference type="PROSITE-ProRule" id="PRU00125"/>
    </source>
</evidence>
<evidence type="ECO:0000269" key="4">
    <source>
    </source>
</evidence>
<evidence type="ECO:0000305" key="5"/>
<evidence type="ECO:0007744" key="6">
    <source>
    </source>
</evidence>
<evidence type="ECO:0007829" key="7">
    <source>
        <dbReference type="PDB" id="4J2X"/>
    </source>
</evidence>
<sequence>MSEKFDCHYCRDPLQGKKYVQKDGRHCCLKCFDKFCANTCVDCRKPISADAKEVHYKNRYWHDNCFRCAKCLHPLASETFVSKDGKILCNKCATREDSPRCKGCFKAIVAGDQNVEYKGTVWHKDCFTCSNCKQVIGTGSFFPKGEDFYCVTCHETKFAKHCVKCNKAITSGGITYQDQPWHAECFVCVTCSKKLAGQRFTAVEDQYYCVDCYKNFVAKKCAGCKNPITGFGKGSSVVAYEGQSWHDYCFHCKKCSVNLANKRFVFHNEQVYCPDCAKKL</sequence>
<dbReference type="EMBL" id="U77039">
    <property type="protein sequence ID" value="AAC02727.1"/>
    <property type="molecule type" value="mRNA"/>
</dbReference>
<dbReference type="EMBL" id="U41739">
    <property type="protein sequence ID" value="AAC02805.1"/>
    <property type="molecule type" value="mRNA"/>
</dbReference>
<dbReference type="EMBL" id="AF114380">
    <property type="protein sequence ID" value="AAD53229.1"/>
    <property type="molecule type" value="mRNA"/>
</dbReference>
<dbReference type="EMBL" id="BC031120">
    <property type="protein sequence ID" value="AAH31120.1"/>
    <property type="molecule type" value="mRNA"/>
</dbReference>
<dbReference type="EMBL" id="BC029024">
    <property type="protein sequence ID" value="AAH29024.1"/>
    <property type="status" value="ALT_INIT"/>
    <property type="molecule type" value="mRNA"/>
</dbReference>
<dbReference type="CCDS" id="CCDS30148.1">
    <molecule id="P97447-1"/>
</dbReference>
<dbReference type="RefSeq" id="NP_001070830.1">
    <property type="nucleotide sequence ID" value="NM_001077362.2"/>
</dbReference>
<dbReference type="RefSeq" id="NP_001274729.1">
    <molecule id="P97447-1"/>
    <property type="nucleotide sequence ID" value="NM_001287800.2"/>
</dbReference>
<dbReference type="RefSeq" id="NP_001399011.1">
    <molecule id="P97447-1"/>
    <property type="nucleotide sequence ID" value="NM_001412082.1"/>
</dbReference>
<dbReference type="RefSeq" id="NP_001399015.1">
    <molecule id="P97447-2"/>
    <property type="nucleotide sequence ID" value="NM_001412086.1"/>
</dbReference>
<dbReference type="RefSeq" id="NP_001399016.1">
    <molecule id="P97447-2"/>
    <property type="nucleotide sequence ID" value="NM_001412087.1"/>
</dbReference>
<dbReference type="RefSeq" id="NP_001399017.1">
    <molecule id="P97447-2"/>
    <property type="nucleotide sequence ID" value="NM_001412088.1"/>
</dbReference>
<dbReference type="RefSeq" id="NP_034341.2">
    <molecule id="P97447-1"/>
    <property type="nucleotide sequence ID" value="NM_010211.4"/>
</dbReference>
<dbReference type="RefSeq" id="XP_006527871.2">
    <property type="nucleotide sequence ID" value="XM_006527808.2"/>
</dbReference>
<dbReference type="RefSeq" id="XP_017173870.1">
    <property type="nucleotide sequence ID" value="XM_017318381.1"/>
</dbReference>
<dbReference type="RefSeq" id="XP_017173871.1">
    <property type="nucleotide sequence ID" value="XM_017318382.1"/>
</dbReference>
<dbReference type="RefSeq" id="XP_030107083.1">
    <molecule id="P97447-1"/>
    <property type="nucleotide sequence ID" value="XM_030251223.2"/>
</dbReference>
<dbReference type="RefSeq" id="XP_030107085.1">
    <molecule id="P97447-2"/>
    <property type="nucleotide sequence ID" value="XM_030251225.2"/>
</dbReference>
<dbReference type="PDB" id="4J2X">
    <property type="method" value="X-ray"/>
    <property type="resolution" value="2.85 A"/>
    <property type="chains" value="B/D=168-194"/>
</dbReference>
<dbReference type="PDBsum" id="4J2X"/>
<dbReference type="SMR" id="P97447"/>
<dbReference type="BioGRID" id="199668">
    <property type="interactions" value="20"/>
</dbReference>
<dbReference type="CORUM" id="P97447"/>
<dbReference type="DIP" id="DIP-42041N"/>
<dbReference type="FunCoup" id="P97447">
    <property type="interactions" value="1393"/>
</dbReference>
<dbReference type="IntAct" id="P97447">
    <property type="interactions" value="3"/>
</dbReference>
<dbReference type="MINT" id="P97447"/>
<dbReference type="STRING" id="10090.ENSMUSP00000110417"/>
<dbReference type="GlyGen" id="P97447">
    <property type="glycosylation" value="1 site, 1 O-linked glycan (1 site)"/>
</dbReference>
<dbReference type="iPTMnet" id="P97447"/>
<dbReference type="PhosphoSitePlus" id="P97447"/>
<dbReference type="SwissPalm" id="P97447"/>
<dbReference type="jPOST" id="P97447"/>
<dbReference type="ProteomicsDB" id="266841">
    <molecule id="P97447-1"/>
</dbReference>
<dbReference type="ProteomicsDB" id="266842">
    <molecule id="P97447-2"/>
</dbReference>
<dbReference type="Pumba" id="P97447"/>
<dbReference type="Antibodypedia" id="16643">
    <property type="antibodies" value="502 antibodies from 36 providers"/>
</dbReference>
<dbReference type="DNASU" id="14199"/>
<dbReference type="Ensembl" id="ENSMUST00000023854.10">
    <molecule id="P97447-1"/>
    <property type="protein sequence ID" value="ENSMUSP00000023854.4"/>
    <property type="gene ID" value="ENSMUSG00000023092.17"/>
</dbReference>
<dbReference type="Ensembl" id="ENSMUST00000116596.8">
    <molecule id="P97447-1"/>
    <property type="protein sequence ID" value="ENSMUSP00000112295.2"/>
    <property type="gene ID" value="ENSMUSG00000023092.17"/>
</dbReference>
<dbReference type="GeneID" id="14199"/>
<dbReference type="KEGG" id="mmu:14199"/>
<dbReference type="UCSC" id="uc009tgm.2">
    <molecule id="P97447-1"/>
    <property type="organism name" value="mouse"/>
</dbReference>
<dbReference type="AGR" id="MGI:1298387"/>
<dbReference type="CTD" id="2273"/>
<dbReference type="MGI" id="MGI:1298387">
    <property type="gene designation" value="Fhl1"/>
</dbReference>
<dbReference type="VEuPathDB" id="HostDB:ENSMUSG00000023092"/>
<dbReference type="GeneTree" id="ENSGT00940000154833"/>
<dbReference type="InParanoid" id="P97447"/>
<dbReference type="OrthoDB" id="1112565at2759"/>
<dbReference type="BioGRID-ORCS" id="14199">
    <property type="hits" value="0 hits in 78 CRISPR screens"/>
</dbReference>
<dbReference type="ChiTaRS" id="Fhl1">
    <property type="organism name" value="mouse"/>
</dbReference>
<dbReference type="PRO" id="PR:P97447"/>
<dbReference type="Proteomes" id="UP000000589">
    <property type="component" value="Chromosome X"/>
</dbReference>
<dbReference type="RNAct" id="P97447">
    <property type="molecule type" value="protein"/>
</dbReference>
<dbReference type="Bgee" id="ENSMUSG00000023092">
    <property type="expression patterns" value="Expressed in plantaris and 275 other cell types or tissues"/>
</dbReference>
<dbReference type="ExpressionAtlas" id="P97447">
    <property type="expression patterns" value="baseline and differential"/>
</dbReference>
<dbReference type="GO" id="GO:0005737">
    <property type="term" value="C:cytoplasm"/>
    <property type="evidence" value="ECO:0007669"/>
    <property type="project" value="UniProtKB-SubCell"/>
</dbReference>
<dbReference type="GO" id="GO:0005634">
    <property type="term" value="C:nucleus"/>
    <property type="evidence" value="ECO:0007669"/>
    <property type="project" value="UniProtKB-SubCell"/>
</dbReference>
<dbReference type="GO" id="GO:0008270">
    <property type="term" value="F:zinc ion binding"/>
    <property type="evidence" value="ECO:0007669"/>
    <property type="project" value="UniProtKB-KW"/>
</dbReference>
<dbReference type="GO" id="GO:0030154">
    <property type="term" value="P:cell differentiation"/>
    <property type="evidence" value="ECO:0007669"/>
    <property type="project" value="UniProtKB-KW"/>
</dbReference>
<dbReference type="GO" id="GO:0007517">
    <property type="term" value="P:muscle organ development"/>
    <property type="evidence" value="ECO:0007669"/>
    <property type="project" value="InterPro"/>
</dbReference>
<dbReference type="CDD" id="cd09344">
    <property type="entry name" value="LIM1_FHL1"/>
    <property type="match status" value="1"/>
</dbReference>
<dbReference type="CDD" id="cd09424">
    <property type="entry name" value="LIM2_FHL1"/>
    <property type="match status" value="1"/>
</dbReference>
<dbReference type="CDD" id="cd09429">
    <property type="entry name" value="LIM3_FHL1"/>
    <property type="match status" value="1"/>
</dbReference>
<dbReference type="CDD" id="cd09348">
    <property type="entry name" value="LIM4_FHL1"/>
    <property type="match status" value="1"/>
</dbReference>
<dbReference type="FunFam" id="2.10.110.10:FF:000013">
    <property type="entry name" value="Four and a half LIM domains 1"/>
    <property type="match status" value="1"/>
</dbReference>
<dbReference type="FunFam" id="2.10.110.10:FF:000052">
    <property type="entry name" value="Four and a half LIM domains 1"/>
    <property type="match status" value="1"/>
</dbReference>
<dbReference type="FunFam" id="2.10.110.10:FF:000050">
    <property type="entry name" value="Four and a half LIM domains protein 1"/>
    <property type="match status" value="1"/>
</dbReference>
<dbReference type="FunFam" id="2.10.110.10:FF:000072">
    <property type="entry name" value="Four and a half LIM domains protein 1"/>
    <property type="match status" value="1"/>
</dbReference>
<dbReference type="Gene3D" id="2.10.110.10">
    <property type="entry name" value="Cysteine Rich Protein"/>
    <property type="match status" value="4"/>
</dbReference>
<dbReference type="InterPro" id="IPR042997">
    <property type="entry name" value="Fhl1"/>
</dbReference>
<dbReference type="InterPro" id="IPR056807">
    <property type="entry name" value="LIM_FHL1/2/3/5_N"/>
</dbReference>
<dbReference type="InterPro" id="IPR001781">
    <property type="entry name" value="Znf_LIM"/>
</dbReference>
<dbReference type="PANTHER" id="PTHR47029">
    <property type="entry name" value="FOUR AND A HALF LIM DOMAINS PROTEIN 1"/>
    <property type="match status" value="1"/>
</dbReference>
<dbReference type="PANTHER" id="PTHR47029:SF2">
    <property type="entry name" value="FOUR AND A HALF LIM DOMAINS PROTEIN 1"/>
    <property type="match status" value="1"/>
</dbReference>
<dbReference type="Pfam" id="PF00412">
    <property type="entry name" value="LIM"/>
    <property type="match status" value="4"/>
</dbReference>
<dbReference type="Pfam" id="PF25076">
    <property type="entry name" value="LIM_FHL2-3_N"/>
    <property type="match status" value="1"/>
</dbReference>
<dbReference type="SMART" id="SM00132">
    <property type="entry name" value="LIM"/>
    <property type="match status" value="4"/>
</dbReference>
<dbReference type="SUPFAM" id="SSF57716">
    <property type="entry name" value="Glucocorticoid receptor-like (DNA-binding domain)"/>
    <property type="match status" value="5"/>
</dbReference>
<dbReference type="PROSITE" id="PS00478">
    <property type="entry name" value="LIM_DOMAIN_1"/>
    <property type="match status" value="4"/>
</dbReference>
<dbReference type="PROSITE" id="PS50023">
    <property type="entry name" value="LIM_DOMAIN_2"/>
    <property type="match status" value="4"/>
</dbReference>
<gene>
    <name type="primary">Fhl1</name>
</gene>
<organism>
    <name type="scientific">Mus musculus</name>
    <name type="common">Mouse</name>
    <dbReference type="NCBI Taxonomy" id="10090"/>
    <lineage>
        <taxon>Eukaryota</taxon>
        <taxon>Metazoa</taxon>
        <taxon>Chordata</taxon>
        <taxon>Craniata</taxon>
        <taxon>Vertebrata</taxon>
        <taxon>Euteleostomi</taxon>
        <taxon>Mammalia</taxon>
        <taxon>Eutheria</taxon>
        <taxon>Euarchontoglires</taxon>
        <taxon>Glires</taxon>
        <taxon>Rodentia</taxon>
        <taxon>Myomorpha</taxon>
        <taxon>Muroidea</taxon>
        <taxon>Muridae</taxon>
        <taxon>Murinae</taxon>
        <taxon>Mus</taxon>
        <taxon>Mus</taxon>
    </lineage>
</organism>
<reference key="1">
    <citation type="journal article" date="1999" name="Biochem. Biophys. Res. Commun.">
        <title>The LIM proteins FHL1 and FHL3 are expressed differently in skeletal muscle.</title>
        <authorList>
            <person name="Morgan M.J."/>
            <person name="Madgwick A.J.A."/>
        </authorList>
    </citation>
    <scope>NUCLEOTIDE SEQUENCE [MRNA] (ISOFORM 1)</scope>
    <source>
        <tissue>Skeletal muscle</tissue>
    </source>
</reference>
<reference key="2">
    <citation type="journal article" date="1998" name="Mol. Cell. Biol.">
        <title>LIM protein KyoT2 negatively regulates transcription by association with the RBP-J DNA-binding protein.</title>
        <authorList>
            <person name="Taniguchi Y."/>
            <person name="Furukawa T."/>
            <person name="Tun T."/>
            <person name="Han H."/>
            <person name="Honjo T."/>
        </authorList>
    </citation>
    <scope>NUCLEOTIDE SEQUENCE [MRNA]</scope>
    <scope>SUBCELLULAR LOCATION</scope>
    <scope>ALTERNATIVE SPLICING</scope>
</reference>
<reference key="3">
    <citation type="journal article" date="2000" name="Mech. Dev.">
        <title>Expression patterns of FHL/SLIM family members suggest important functional roles in skeletal muscle and cardiovascular system.</title>
        <authorList>
            <person name="Chu P.-H."/>
            <person name="Ruiz-Lozano P."/>
            <person name="Zhou Q."/>
            <person name="Cai C."/>
            <person name="Chen J."/>
        </authorList>
    </citation>
    <scope>NUCLEOTIDE SEQUENCE [MRNA] (ISOFORM 1)</scope>
    <scope>TISSUE SPECIFICITY</scope>
</reference>
<reference key="4">
    <citation type="journal article" date="2004" name="Genome Res.">
        <title>The status, quality, and expansion of the NIH full-length cDNA project: the Mammalian Gene Collection (MGC).</title>
        <authorList>
            <consortium name="The MGC Project Team"/>
        </authorList>
    </citation>
    <scope>NUCLEOTIDE SEQUENCE [LARGE SCALE MRNA] (ISOFORM 1)</scope>
    <source>
        <tissue>Colon</tissue>
    </source>
</reference>
<reference key="5">
    <citation type="journal article" date="2010" name="Cell">
        <title>A tissue-specific atlas of mouse protein phosphorylation and expression.</title>
        <authorList>
            <person name="Huttlin E.L."/>
            <person name="Jedrychowski M.P."/>
            <person name="Elias J.E."/>
            <person name="Goswami T."/>
            <person name="Rad R."/>
            <person name="Beausoleil S.A."/>
            <person name="Villen J."/>
            <person name="Haas W."/>
            <person name="Sowa M.E."/>
            <person name="Gygi S.P."/>
        </authorList>
    </citation>
    <scope>IDENTIFICATION BY MASS SPECTROMETRY [LARGE SCALE ANALYSIS]</scope>
    <source>
        <tissue>Brain</tissue>
        <tissue>Brown adipose tissue</tissue>
        <tissue>Heart</tissue>
        <tissue>Kidney</tissue>
        <tissue>Lung</tissue>
        <tissue>Spleen</tissue>
        <tissue>Testis</tissue>
    </source>
</reference>
<reference key="6">
    <citation type="journal article" date="2013" name="Mol. Cell">
        <title>SIRT5-mediated lysine desuccinylation impacts diverse metabolic pathways.</title>
        <authorList>
            <person name="Park J."/>
            <person name="Chen Y."/>
            <person name="Tishkoff D.X."/>
            <person name="Peng C."/>
            <person name="Tan M."/>
            <person name="Dai L."/>
            <person name="Xie Z."/>
            <person name="Zhang Y."/>
            <person name="Zwaans B.M."/>
            <person name="Skinner M.E."/>
            <person name="Lombard D.B."/>
            <person name="Zhao Y."/>
        </authorList>
    </citation>
    <scope>ACETYLATION [LARGE SCALE ANALYSIS] AT SER-2 AND LYS-4</scope>
    <scope>CLEAVAGE OF INITIATOR METHIONINE [LARGE SCALE ANALYSIS]</scope>
    <scope>IDENTIFICATION BY MASS SPECTROMETRY [LARGE SCALE ANALYSIS]</scope>
    <source>
        <tissue>Embryonic fibroblast</tissue>
    </source>
</reference>
<comment type="function">
    <text>May have an involvement in muscle development or hypertrophy. Isoform 2 binds to RBP-J and plays a negative regulatory role in the RBP-J-mediated transcription in mammalian systems.</text>
</comment>
<comment type="interaction">
    <interactant intactId="EBI-16082627">
        <id>P97447-2</id>
    </interactant>
    <interactant intactId="EBI-1392666">
        <id>P31266</id>
        <label>Rbpj</label>
    </interactant>
    <organismsDiffer>false</organismsDiffer>
    <experiments>4</experiments>
</comment>
<comment type="subcellular location">
    <molecule>Isoform 1</molecule>
    <subcellularLocation>
        <location>Cytoplasm</location>
    </subcellularLocation>
</comment>
<comment type="subcellular location">
    <molecule>Isoform 2</molecule>
    <subcellularLocation>
        <location>Nucleus</location>
    </subcellularLocation>
</comment>
<comment type="alternative products">
    <event type="alternative splicing"/>
    <isoform>
        <id>P97447-1</id>
        <name>1</name>
        <name>KyoT1</name>
        <sequence type="displayed"/>
    </isoform>
    <isoform>
        <id>P97447-2</id>
        <name>2</name>
        <name>KyoT2</name>
        <sequence type="described" ref="VSP_003120 VSP_003121"/>
    </isoform>
    <text>Additional isoforms seem to exist.</text>
</comment>
<comment type="tissue specificity">
    <text evidence="4">Isoform 1 seems to be most abundant in each tissue and isoform 2 much less abundant. Isoform 1 is highly expressed in skeletal muscle and lung, and to a lesser extent in heart, brain and kidney. Isoform 2 was found in brain, lung kidney and genital organs.</text>
</comment>
<comment type="sequence caution" evidence="5">
    <conflict type="erroneous initiation">
        <sequence resource="EMBL-CDS" id="AAH29024"/>
    </conflict>
</comment>
<name>FHL1_MOUSE</name>
<accession>P97447</accession>
<accession>O55181</accession>
<accession>Q8K318</accession>
<feature type="initiator methionine" description="Removed" evidence="6">
    <location>
        <position position="1"/>
    </location>
</feature>
<feature type="chain" id="PRO_0000075736" description="Four and a half LIM domains protein 1">
    <location>
        <begin position="2"/>
        <end position="280"/>
    </location>
</feature>
<feature type="domain" description="LIM zinc-binding 1" evidence="3">
    <location>
        <begin position="40"/>
        <end position="92"/>
    </location>
</feature>
<feature type="domain" description="LIM zinc-binding 2" evidence="3">
    <location>
        <begin position="101"/>
        <end position="153"/>
    </location>
</feature>
<feature type="domain" description="LIM zinc-binding 3" evidence="3">
    <location>
        <begin position="162"/>
        <end position="212"/>
    </location>
</feature>
<feature type="domain" description="LIM zinc-binding 4" evidence="3">
    <location>
        <begin position="221"/>
        <end position="276"/>
    </location>
</feature>
<feature type="zinc finger region" description="C4-type" evidence="2">
    <location>
        <begin position="7"/>
        <end position="31"/>
    </location>
</feature>
<feature type="modified residue" description="N-acetylserine" evidence="6">
    <location>
        <position position="2"/>
    </location>
</feature>
<feature type="modified residue" description="N6-acetyllysine" evidence="6">
    <location>
        <position position="4"/>
    </location>
</feature>
<feature type="cross-link" description="Glycyl lysine isopeptide (Lys-Gly) (interchain with G-Cter in SUMO2)" evidence="1">
    <location>
        <position position="86"/>
    </location>
</feature>
<feature type="splice variant" id="VSP_003120" description="In isoform 2." evidence="5">
    <original>AITSGGITYQDQPWHAECFVCVTCSKK</original>
    <variation>GLVKAPVWWPMKDNPGTTTASTAKNAP</variation>
    <location>
        <begin position="168"/>
        <end position="194"/>
    </location>
</feature>
<feature type="splice variant" id="VSP_003121" description="In isoform 2." evidence="5">
    <location>
        <begin position="195"/>
        <end position="280"/>
    </location>
</feature>
<feature type="sequence conflict" description="In Ref. 1; AAC02727." evidence="5" ref="1">
    <original>S</original>
    <variation>F</variation>
    <location>
        <position position="98"/>
    </location>
</feature>
<feature type="strand" evidence="7">
    <location>
        <begin position="169"/>
        <end position="171"/>
    </location>
</feature>
<proteinExistence type="evidence at protein level"/>
<protein>
    <recommendedName>
        <fullName>Four and a half LIM domains protein 1</fullName>
        <shortName>FHL-1</shortName>
    </recommendedName>
    <alternativeName>
        <fullName>KyoT</fullName>
    </alternativeName>
    <alternativeName>
        <fullName>RBP-associated molecule 14-1</fullName>
        <shortName>RAM14-1</shortName>
    </alternativeName>
    <alternativeName>
        <fullName>Skeletal muscle LIM-protein 1</fullName>
        <shortName>SLIM</shortName>
        <shortName>SLIM-1</shortName>
    </alternativeName>
</protein>